<gene>
    <name evidence="1" type="primary">dadA</name>
    <name type="ordered locus">Arad_8335</name>
</gene>
<feature type="chain" id="PRO_1000164636" description="D-amino acid dehydrogenase">
    <location>
        <begin position="1"/>
        <end position="416"/>
    </location>
</feature>
<feature type="binding site" evidence="1">
    <location>
        <begin position="3"/>
        <end position="17"/>
    </location>
    <ligand>
        <name>FAD</name>
        <dbReference type="ChEBI" id="CHEBI:57692"/>
    </ligand>
</feature>
<reference key="1">
    <citation type="journal article" date="2009" name="J. Bacteriol.">
        <title>Genome sequences of three Agrobacterium biovars help elucidate the evolution of multichromosome genomes in bacteria.</title>
        <authorList>
            <person name="Slater S.C."/>
            <person name="Goldman B.S."/>
            <person name="Goodner B."/>
            <person name="Setubal J.C."/>
            <person name="Farrand S.K."/>
            <person name="Nester E.W."/>
            <person name="Burr T.J."/>
            <person name="Banta L."/>
            <person name="Dickerman A.W."/>
            <person name="Paulsen I."/>
            <person name="Otten L."/>
            <person name="Suen G."/>
            <person name="Welch R."/>
            <person name="Almeida N.F."/>
            <person name="Arnold F."/>
            <person name="Burton O.T."/>
            <person name="Du Z."/>
            <person name="Ewing A."/>
            <person name="Godsy E."/>
            <person name="Heisel S."/>
            <person name="Houmiel K.L."/>
            <person name="Jhaveri J."/>
            <person name="Lu J."/>
            <person name="Miller N.M."/>
            <person name="Norton S."/>
            <person name="Chen Q."/>
            <person name="Phoolcharoen W."/>
            <person name="Ohlin V."/>
            <person name="Ondrusek D."/>
            <person name="Pride N."/>
            <person name="Stricklin S.L."/>
            <person name="Sun J."/>
            <person name="Wheeler C."/>
            <person name="Wilson L."/>
            <person name="Zhu H."/>
            <person name="Wood D.W."/>
        </authorList>
    </citation>
    <scope>NUCLEOTIDE SEQUENCE [LARGE SCALE GENOMIC DNA]</scope>
    <source>
        <strain>K84 / ATCC BAA-868</strain>
    </source>
</reference>
<keyword id="KW-0274">FAD</keyword>
<keyword id="KW-0285">Flavoprotein</keyword>
<keyword id="KW-0560">Oxidoreductase</keyword>
<evidence type="ECO:0000255" key="1">
    <source>
        <dbReference type="HAMAP-Rule" id="MF_01202"/>
    </source>
</evidence>
<sequence length="416" mass="44517">MKVTILGAGVIGVTTAYQLAKAGHDVTVVDRQAGPALETSFANAGEVSFGYCSPWAAPGIPQKALKWLFMKHAPLILRPKVDTAMLSWLVKMLSNCTSERYAVNKSRMLRLADYSRIALAEVRAGTGIAYDQRMQGTLQLFRTEQQLDASAKDVKALAADGIPYEVLDRDGCIRVEPALSHARDKIVGGLLTPKDETGDCFKFTNALAAKAVELGVQFLYGRTIKDLQVEGGQIRGVVTDQGAIASDAVVVALGSYSPLLLKQVGISLPVYPVKGYSLTIPIVDPARSPESTVMDETYKIAITRLGDRIRVGGMAEISGYTNDLGLARRNTLEHSVMDLFPGGDVSKAAFWSGLRPMTPDGTPVIGATKIRGLFLNTGHGTLGWTMSCGSARVISDLVSGHKAEIDTADLSVARYG</sequence>
<proteinExistence type="inferred from homology"/>
<accession>B9JI94</accession>
<protein>
    <recommendedName>
        <fullName evidence="1">D-amino acid dehydrogenase</fullName>
        <ecNumber evidence="1">1.4.99.-</ecNumber>
    </recommendedName>
</protein>
<dbReference type="EC" id="1.4.99.-" evidence="1"/>
<dbReference type="EMBL" id="CP000629">
    <property type="protein sequence ID" value="ACM29636.1"/>
    <property type="molecule type" value="Genomic_DNA"/>
</dbReference>
<dbReference type="RefSeq" id="WP_012649925.1">
    <property type="nucleotide sequence ID" value="NC_011983.1"/>
</dbReference>
<dbReference type="SMR" id="B9JI94"/>
<dbReference type="STRING" id="311403.Arad_8335"/>
<dbReference type="KEGG" id="ara:Arad_8335"/>
<dbReference type="eggNOG" id="COG0665">
    <property type="taxonomic scope" value="Bacteria"/>
</dbReference>
<dbReference type="HOGENOM" id="CLU_007884_9_2_5"/>
<dbReference type="UniPathway" id="UPA00043">
    <property type="reaction ID" value="UER00498"/>
</dbReference>
<dbReference type="Proteomes" id="UP000001600">
    <property type="component" value="Chromosome 2"/>
</dbReference>
<dbReference type="GO" id="GO:0005737">
    <property type="term" value="C:cytoplasm"/>
    <property type="evidence" value="ECO:0007669"/>
    <property type="project" value="TreeGrafter"/>
</dbReference>
<dbReference type="GO" id="GO:0005886">
    <property type="term" value="C:plasma membrane"/>
    <property type="evidence" value="ECO:0007669"/>
    <property type="project" value="TreeGrafter"/>
</dbReference>
<dbReference type="GO" id="GO:0008718">
    <property type="term" value="F:D-amino-acid dehydrogenase activity"/>
    <property type="evidence" value="ECO:0007669"/>
    <property type="project" value="UniProtKB-UniRule"/>
</dbReference>
<dbReference type="GO" id="GO:0055130">
    <property type="term" value="P:D-alanine catabolic process"/>
    <property type="evidence" value="ECO:0007669"/>
    <property type="project" value="UniProtKB-UniPathway"/>
</dbReference>
<dbReference type="FunFam" id="3.50.50.60:FF:000020">
    <property type="entry name" value="D-amino acid dehydrogenase"/>
    <property type="match status" value="1"/>
</dbReference>
<dbReference type="Gene3D" id="3.30.9.10">
    <property type="entry name" value="D-Amino Acid Oxidase, subunit A, domain 2"/>
    <property type="match status" value="1"/>
</dbReference>
<dbReference type="Gene3D" id="3.50.50.60">
    <property type="entry name" value="FAD/NAD(P)-binding domain"/>
    <property type="match status" value="2"/>
</dbReference>
<dbReference type="HAMAP" id="MF_01202">
    <property type="entry name" value="DadA"/>
    <property type="match status" value="1"/>
</dbReference>
<dbReference type="InterPro" id="IPR023080">
    <property type="entry name" value="DadA"/>
</dbReference>
<dbReference type="InterPro" id="IPR006076">
    <property type="entry name" value="FAD-dep_OxRdtase"/>
</dbReference>
<dbReference type="InterPro" id="IPR036188">
    <property type="entry name" value="FAD/NAD-bd_sf"/>
</dbReference>
<dbReference type="NCBIfam" id="NF001933">
    <property type="entry name" value="PRK00711.1"/>
    <property type="match status" value="1"/>
</dbReference>
<dbReference type="PANTHER" id="PTHR13847:SF280">
    <property type="entry name" value="D-AMINO ACID DEHYDROGENASE"/>
    <property type="match status" value="1"/>
</dbReference>
<dbReference type="PANTHER" id="PTHR13847">
    <property type="entry name" value="SARCOSINE DEHYDROGENASE-RELATED"/>
    <property type="match status" value="1"/>
</dbReference>
<dbReference type="Pfam" id="PF01266">
    <property type="entry name" value="DAO"/>
    <property type="match status" value="1"/>
</dbReference>
<dbReference type="SUPFAM" id="SSF54373">
    <property type="entry name" value="FAD-linked reductases, C-terminal domain"/>
    <property type="match status" value="1"/>
</dbReference>
<dbReference type="SUPFAM" id="SSF51905">
    <property type="entry name" value="FAD/NAD(P)-binding domain"/>
    <property type="match status" value="1"/>
</dbReference>
<name>DADA_RHIR8</name>
<comment type="function">
    <text evidence="1">Oxidative deamination of D-amino acids.</text>
</comment>
<comment type="catalytic activity">
    <reaction evidence="1">
        <text>a D-alpha-amino acid + A + H2O = a 2-oxocarboxylate + AH2 + NH4(+)</text>
        <dbReference type="Rhea" id="RHEA:18125"/>
        <dbReference type="ChEBI" id="CHEBI:13193"/>
        <dbReference type="ChEBI" id="CHEBI:15377"/>
        <dbReference type="ChEBI" id="CHEBI:17499"/>
        <dbReference type="ChEBI" id="CHEBI:28938"/>
        <dbReference type="ChEBI" id="CHEBI:35179"/>
        <dbReference type="ChEBI" id="CHEBI:59871"/>
    </reaction>
</comment>
<comment type="cofactor">
    <cofactor evidence="1">
        <name>FAD</name>
        <dbReference type="ChEBI" id="CHEBI:57692"/>
    </cofactor>
</comment>
<comment type="pathway">
    <text>Amino-acid degradation; D-alanine degradation; NH(3) and pyruvate from D-alanine: step 1/1.</text>
</comment>
<comment type="similarity">
    <text evidence="1">Belongs to the DadA oxidoreductase family.</text>
</comment>
<organism>
    <name type="scientific">Rhizobium rhizogenes (strain K84 / ATCC BAA-868)</name>
    <name type="common">Agrobacterium radiobacter</name>
    <dbReference type="NCBI Taxonomy" id="311403"/>
    <lineage>
        <taxon>Bacteria</taxon>
        <taxon>Pseudomonadati</taxon>
        <taxon>Pseudomonadota</taxon>
        <taxon>Alphaproteobacteria</taxon>
        <taxon>Hyphomicrobiales</taxon>
        <taxon>Rhizobiaceae</taxon>
        <taxon>Rhizobium/Agrobacterium group</taxon>
        <taxon>Rhizobium</taxon>
    </lineage>
</organism>